<feature type="chain" id="PRO_0000417769" description="CASP-like protein 4B2">
    <location>
        <begin position="1"/>
        <end position="203"/>
    </location>
</feature>
<feature type="topological domain" description="Cytoplasmic" evidence="2">
    <location>
        <begin position="1"/>
        <end position="57"/>
    </location>
</feature>
<feature type="transmembrane region" description="Helical" evidence="2">
    <location>
        <begin position="58"/>
        <end position="78"/>
    </location>
</feature>
<feature type="topological domain" description="Extracellular" evidence="2">
    <location>
        <begin position="79"/>
        <end position="92"/>
    </location>
</feature>
<feature type="transmembrane region" description="Helical" evidence="2">
    <location>
        <begin position="93"/>
        <end position="113"/>
    </location>
</feature>
<feature type="topological domain" description="Cytoplasmic" evidence="2">
    <location>
        <begin position="114"/>
        <end position="135"/>
    </location>
</feature>
<feature type="transmembrane region" description="Helical" evidence="2">
    <location>
        <begin position="136"/>
        <end position="156"/>
    </location>
</feature>
<feature type="topological domain" description="Extracellular" evidence="2">
    <location>
        <begin position="157"/>
        <end position="171"/>
    </location>
</feature>
<feature type="transmembrane region" description="Helical" evidence="2">
    <location>
        <begin position="172"/>
        <end position="192"/>
    </location>
</feature>
<feature type="topological domain" description="Cytoplasmic" evidence="2">
    <location>
        <begin position="193"/>
        <end position="203"/>
    </location>
</feature>
<feature type="glycosylation site" description="N-linked (GlcNAc...) asparagine" evidence="2">
    <location>
        <position position="167"/>
    </location>
</feature>
<name>CSPL2_HORVV</name>
<proteinExistence type="evidence at transcript level"/>
<protein>
    <recommendedName>
        <fullName>CASP-like protein 4B2</fullName>
        <shortName>HvCASPL4B2</shortName>
    </recommendedName>
</protein>
<keyword id="KW-1003">Cell membrane</keyword>
<keyword id="KW-0325">Glycoprotein</keyword>
<keyword id="KW-0472">Membrane</keyword>
<keyword id="KW-1185">Reference proteome</keyword>
<keyword id="KW-0812">Transmembrane</keyword>
<keyword id="KW-1133">Transmembrane helix</keyword>
<comment type="subunit">
    <text evidence="1">Homodimer and heterodimers.</text>
</comment>
<comment type="subcellular location">
    <subcellularLocation>
        <location evidence="1">Cell membrane</location>
        <topology evidence="1">Multi-pass membrane protein</topology>
    </subcellularLocation>
</comment>
<comment type="similarity">
    <text evidence="3">Belongs to the Casparian strip membrane proteins (CASP) family.</text>
</comment>
<evidence type="ECO:0000250" key="1"/>
<evidence type="ECO:0000255" key="2"/>
<evidence type="ECO:0000305" key="3"/>
<dbReference type="EMBL" id="AK357983">
    <property type="protein sequence ID" value="BAJ89197.1"/>
    <property type="molecule type" value="mRNA"/>
</dbReference>
<dbReference type="RefSeq" id="NP_001413746.1">
    <property type="nucleotide sequence ID" value="NM_001426817.1"/>
</dbReference>
<dbReference type="SMR" id="F2D276"/>
<dbReference type="FunCoup" id="F2D276">
    <property type="interactions" value="2"/>
</dbReference>
<dbReference type="STRING" id="112509.F2D276"/>
<dbReference type="PaxDb" id="4513-MLOC_74127.5"/>
<dbReference type="EnsemblPlants" id="HORVU.MOREX.r2.4HG0319140.1">
    <property type="protein sequence ID" value="HORVU.MOREX.r2.4HG0319140.1"/>
    <property type="gene ID" value="HORVU.MOREX.r2.4HG0319140"/>
</dbReference>
<dbReference type="EnsemblPlants" id="HORVU.MOREX.r2.4HG0319140.1.mrna1">
    <property type="protein sequence ID" value="HORVU.MOREX.r2.4HG0319140.1.mrna1"/>
    <property type="gene ID" value="HORVU.MOREX.r2.4HG0319140.1"/>
</dbReference>
<dbReference type="EnsemblPlants" id="HORVU.MOREX.r3.4HG0383740.1">
    <property type="protein sequence ID" value="HORVU.MOREX.r3.4HG0383740.1"/>
    <property type="gene ID" value="HORVU.MOREX.r3.4HG0383740"/>
</dbReference>
<dbReference type="GeneID" id="123448870"/>
<dbReference type="Gramene" id="HORVU.MOREX.r2.4HG0319140.1">
    <property type="protein sequence ID" value="HORVU.MOREX.r2.4HG0319140.1"/>
    <property type="gene ID" value="HORVU.MOREX.r2.4HG0319140"/>
</dbReference>
<dbReference type="Gramene" id="HORVU.MOREX.r2.4HG0319140.1.mrna1">
    <property type="protein sequence ID" value="HORVU.MOREX.r2.4HG0319140.1.mrna1"/>
    <property type="gene ID" value="HORVU.MOREX.r2.4HG0319140.1"/>
</dbReference>
<dbReference type="Gramene" id="HORVU.MOREX.r3.4HG0383740.1">
    <property type="protein sequence ID" value="HORVU.MOREX.r3.4HG0383740.1"/>
    <property type="gene ID" value="HORVU.MOREX.r3.4HG0383740"/>
</dbReference>
<dbReference type="eggNOG" id="ENOG502RYC3">
    <property type="taxonomic scope" value="Eukaryota"/>
</dbReference>
<dbReference type="HOGENOM" id="CLU_048961_4_1_1"/>
<dbReference type="InParanoid" id="F2D276"/>
<dbReference type="OrthoDB" id="1924823at2759"/>
<dbReference type="Proteomes" id="UP000011116">
    <property type="component" value="Chromosome 4H"/>
</dbReference>
<dbReference type="ExpressionAtlas" id="F2D276">
    <property type="expression patterns" value="baseline and differential"/>
</dbReference>
<dbReference type="GO" id="GO:0005886">
    <property type="term" value="C:plasma membrane"/>
    <property type="evidence" value="ECO:0007669"/>
    <property type="project" value="UniProtKB-SubCell"/>
</dbReference>
<dbReference type="InterPro" id="IPR006702">
    <property type="entry name" value="CASP_dom"/>
</dbReference>
<dbReference type="PANTHER" id="PTHR33573">
    <property type="entry name" value="CASP-LIKE PROTEIN 4A4"/>
    <property type="match status" value="1"/>
</dbReference>
<dbReference type="PANTHER" id="PTHR33573:SF54">
    <property type="entry name" value="CASP-LIKE PROTEIN 4B2"/>
    <property type="match status" value="1"/>
</dbReference>
<dbReference type="Pfam" id="PF04535">
    <property type="entry name" value="CASP_dom"/>
    <property type="match status" value="1"/>
</dbReference>
<sequence length="203" mass="21613">MAMVTADASAAADAATKQPDVEKDYSSYNGASTAGAGGGGVVESVVARWRREDMLDKCPLALHAAAAAFAFVALVLVASNQHGDWMQFDRYQEYMYLLAIAALAFAYSLAQALRHAHRMRGGADPIPAPSARLFDFIADQVVAYLLMSALSAAIPITNRMRTAVINNFTDATAAAISMAFLAFVALALSATVSGYKLSRQMYM</sequence>
<accession>F2D276</accession>
<organism>
    <name type="scientific">Hordeum vulgare subsp. vulgare</name>
    <name type="common">Domesticated barley</name>
    <dbReference type="NCBI Taxonomy" id="112509"/>
    <lineage>
        <taxon>Eukaryota</taxon>
        <taxon>Viridiplantae</taxon>
        <taxon>Streptophyta</taxon>
        <taxon>Embryophyta</taxon>
        <taxon>Tracheophyta</taxon>
        <taxon>Spermatophyta</taxon>
        <taxon>Magnoliopsida</taxon>
        <taxon>Liliopsida</taxon>
        <taxon>Poales</taxon>
        <taxon>Poaceae</taxon>
        <taxon>BOP clade</taxon>
        <taxon>Pooideae</taxon>
        <taxon>Triticodae</taxon>
        <taxon>Triticeae</taxon>
        <taxon>Hordeinae</taxon>
        <taxon>Hordeum</taxon>
    </lineage>
</organism>
<reference key="1">
    <citation type="journal article" date="2011" name="Plant Physiol.">
        <title>Comprehensive sequence analysis of 24,783 barley full-length cDNAs derived from 12 clone libraries.</title>
        <authorList>
            <person name="Matsumoto T."/>
            <person name="Tanaka T."/>
            <person name="Sakai H."/>
            <person name="Amano N."/>
            <person name="Kanamori H."/>
            <person name="Kurita K."/>
            <person name="Kikuta A."/>
            <person name="Kamiya K."/>
            <person name="Yamamoto M."/>
            <person name="Ikawa H."/>
            <person name="Fujii N."/>
            <person name="Hori K."/>
            <person name="Itoh T."/>
            <person name="Sato K."/>
        </authorList>
    </citation>
    <scope>NUCLEOTIDE SEQUENCE [LARGE SCALE MRNA]</scope>
    <source>
        <strain>cv. Haruna Nijo</strain>
        <tissue>Seedling shoot</tissue>
    </source>
</reference>
<reference key="2">
    <citation type="journal article" date="2014" name="Plant Physiol.">
        <title>Functional and evolutionary analysis of the CASPARIAN STRIP MEMBRANE DOMAIN PROTEIN family.</title>
        <authorList>
            <person name="Roppolo D."/>
            <person name="Boeckmann B."/>
            <person name="Pfister A."/>
            <person name="Boutet E."/>
            <person name="Rubio M.C."/>
            <person name="Denervaud-Tendon V."/>
            <person name="Vermeer J.E."/>
            <person name="Gheyselinck J."/>
            <person name="Xenarios I."/>
            <person name="Geldner N."/>
        </authorList>
    </citation>
    <scope>GENE FAMILY</scope>
    <scope>NOMENCLATURE</scope>
</reference>